<accession>Q5FH27</accession>
<keyword id="KW-0028">Amino-acid biosynthesis</keyword>
<keyword id="KW-0055">Arginine biosynthesis</keyword>
<keyword id="KW-0067">ATP-binding</keyword>
<keyword id="KW-0963">Cytoplasm</keyword>
<keyword id="KW-0436">Ligase</keyword>
<keyword id="KW-0547">Nucleotide-binding</keyword>
<gene>
    <name evidence="1" type="primary">argG</name>
    <name type="ordered locus">ERGA_CDS_03850</name>
</gene>
<sequence>MKKIVLAYSGGLDTSVILKWLQENYNCEVVVFTADIGQEDDMSVIQKKAAALNVKEIFIEDLKEEFVRDFVFPMFRANTIYEGYYLLGTSIARPLIAKRQIEIAHLTGADAVAHGATGKGNDQVRFEFGYYCCDPNIKVIAPWRQWELTSRHSLIEYARKNNINVPLDKVNEPPYSIDANLLHISYEGKSLEDPYVEPDYTMLSRSLTPELASSIPEYIEITFEQGDPIAINDIPLSPANLLHQLNKIGGKHGIGIVDIVENRYIGIKSRGIYETPGGTILLHAHRAIESITLDRESAHLKDEIMPKYAKLIYNGYWWTTERKMLQSLIDNHKKKFNGTVRIKLYKGSVVVVGRKSNNSLYSYNLASFDSESQGYDHKDAEGFIKVNSLRLKKS</sequence>
<organism>
    <name type="scientific">Ehrlichia ruminantium (strain Gardel)</name>
    <dbReference type="NCBI Taxonomy" id="302409"/>
    <lineage>
        <taxon>Bacteria</taxon>
        <taxon>Pseudomonadati</taxon>
        <taxon>Pseudomonadota</taxon>
        <taxon>Alphaproteobacteria</taxon>
        <taxon>Rickettsiales</taxon>
        <taxon>Anaplasmataceae</taxon>
        <taxon>Ehrlichia</taxon>
    </lineage>
</organism>
<comment type="catalytic activity">
    <reaction evidence="1">
        <text>L-citrulline + L-aspartate + ATP = 2-(N(omega)-L-arginino)succinate + AMP + diphosphate + H(+)</text>
        <dbReference type="Rhea" id="RHEA:10932"/>
        <dbReference type="ChEBI" id="CHEBI:15378"/>
        <dbReference type="ChEBI" id="CHEBI:29991"/>
        <dbReference type="ChEBI" id="CHEBI:30616"/>
        <dbReference type="ChEBI" id="CHEBI:33019"/>
        <dbReference type="ChEBI" id="CHEBI:57472"/>
        <dbReference type="ChEBI" id="CHEBI:57743"/>
        <dbReference type="ChEBI" id="CHEBI:456215"/>
        <dbReference type="EC" id="6.3.4.5"/>
    </reaction>
</comment>
<comment type="pathway">
    <text evidence="1">Amino-acid biosynthesis; L-arginine biosynthesis; L-arginine from L-ornithine and carbamoyl phosphate: step 2/3.</text>
</comment>
<comment type="subunit">
    <text evidence="1">Homotetramer.</text>
</comment>
<comment type="subcellular location">
    <subcellularLocation>
        <location evidence="1">Cytoplasm</location>
    </subcellularLocation>
</comment>
<comment type="similarity">
    <text evidence="1">Belongs to the argininosuccinate synthase family. Type 1 subfamily.</text>
</comment>
<reference key="1">
    <citation type="journal article" date="2006" name="J. Bacteriol.">
        <title>Comparative genomic analysis of three strains of Ehrlichia ruminantium reveals an active process of genome size plasticity.</title>
        <authorList>
            <person name="Frutos R."/>
            <person name="Viari A."/>
            <person name="Ferraz C."/>
            <person name="Morgat A."/>
            <person name="Eychenie S."/>
            <person name="Kandassamy Y."/>
            <person name="Chantal I."/>
            <person name="Bensaid A."/>
            <person name="Coissac E."/>
            <person name="Vachiery N."/>
            <person name="Demaille J."/>
            <person name="Martinez D."/>
        </authorList>
    </citation>
    <scope>NUCLEOTIDE SEQUENCE [LARGE SCALE GENOMIC DNA]</scope>
    <source>
        <strain>Gardel</strain>
    </source>
</reference>
<name>ASSY_EHRRG</name>
<proteinExistence type="inferred from homology"/>
<feature type="chain" id="PRO_0000263925" description="Argininosuccinate synthase">
    <location>
        <begin position="1"/>
        <end position="394"/>
    </location>
</feature>
<feature type="binding site" evidence="1">
    <location>
        <begin position="7"/>
        <end position="15"/>
    </location>
    <ligand>
        <name>ATP</name>
        <dbReference type="ChEBI" id="CHEBI:30616"/>
    </ligand>
</feature>
<feature type="binding site" evidence="1">
    <location>
        <position position="34"/>
    </location>
    <ligand>
        <name>ATP</name>
        <dbReference type="ChEBI" id="CHEBI:30616"/>
    </ligand>
</feature>
<feature type="binding site" evidence="1">
    <location>
        <position position="85"/>
    </location>
    <ligand>
        <name>L-citrulline</name>
        <dbReference type="ChEBI" id="CHEBI:57743"/>
    </ligand>
</feature>
<feature type="binding site" evidence="1">
    <location>
        <position position="90"/>
    </location>
    <ligand>
        <name>L-citrulline</name>
        <dbReference type="ChEBI" id="CHEBI:57743"/>
    </ligand>
</feature>
<feature type="binding site" evidence="1">
    <location>
        <position position="115"/>
    </location>
    <ligand>
        <name>ATP</name>
        <dbReference type="ChEBI" id="CHEBI:30616"/>
    </ligand>
</feature>
<feature type="binding site" evidence="1">
    <location>
        <position position="117"/>
    </location>
    <ligand>
        <name>L-aspartate</name>
        <dbReference type="ChEBI" id="CHEBI:29991"/>
    </ligand>
</feature>
<feature type="binding site" evidence="1">
    <location>
        <position position="121"/>
    </location>
    <ligand>
        <name>L-aspartate</name>
        <dbReference type="ChEBI" id="CHEBI:29991"/>
    </ligand>
</feature>
<feature type="binding site" evidence="1">
    <location>
        <position position="121"/>
    </location>
    <ligand>
        <name>L-citrulline</name>
        <dbReference type="ChEBI" id="CHEBI:57743"/>
    </ligand>
</feature>
<feature type="binding site" evidence="1">
    <location>
        <position position="122"/>
    </location>
    <ligand>
        <name>L-aspartate</name>
        <dbReference type="ChEBI" id="CHEBI:29991"/>
    </ligand>
</feature>
<feature type="binding site" evidence="1">
    <location>
        <position position="125"/>
    </location>
    <ligand>
        <name>L-citrulline</name>
        <dbReference type="ChEBI" id="CHEBI:57743"/>
    </ligand>
</feature>
<feature type="binding site" evidence="1">
    <location>
        <position position="176"/>
    </location>
    <ligand>
        <name>L-citrulline</name>
        <dbReference type="ChEBI" id="CHEBI:57743"/>
    </ligand>
</feature>
<feature type="binding site" evidence="1">
    <location>
        <position position="185"/>
    </location>
    <ligand>
        <name>L-citrulline</name>
        <dbReference type="ChEBI" id="CHEBI:57743"/>
    </ligand>
</feature>
<feature type="binding site" evidence="1">
    <location>
        <position position="261"/>
    </location>
    <ligand>
        <name>L-citrulline</name>
        <dbReference type="ChEBI" id="CHEBI:57743"/>
    </ligand>
</feature>
<feature type="binding site" evidence="1">
    <location>
        <position position="273"/>
    </location>
    <ligand>
        <name>L-citrulline</name>
        <dbReference type="ChEBI" id="CHEBI:57743"/>
    </ligand>
</feature>
<protein>
    <recommendedName>
        <fullName evidence="1">Argininosuccinate synthase</fullName>
        <ecNumber evidence="1">6.3.4.5</ecNumber>
    </recommendedName>
    <alternativeName>
        <fullName evidence="1">Citrulline--aspartate ligase</fullName>
    </alternativeName>
</protein>
<evidence type="ECO:0000255" key="1">
    <source>
        <dbReference type="HAMAP-Rule" id="MF_00005"/>
    </source>
</evidence>
<dbReference type="EC" id="6.3.4.5" evidence="1"/>
<dbReference type="EMBL" id="CR925677">
    <property type="protein sequence ID" value="CAI27837.1"/>
    <property type="molecule type" value="Genomic_DNA"/>
</dbReference>
<dbReference type="RefSeq" id="WP_011255525.1">
    <property type="nucleotide sequence ID" value="NC_006831.1"/>
</dbReference>
<dbReference type="SMR" id="Q5FH27"/>
<dbReference type="KEGG" id="erg:ERGA_CDS_03850"/>
<dbReference type="HOGENOM" id="CLU_032784_4_2_5"/>
<dbReference type="OrthoDB" id="9801641at2"/>
<dbReference type="UniPathway" id="UPA00068">
    <property type="reaction ID" value="UER00113"/>
</dbReference>
<dbReference type="Proteomes" id="UP000000533">
    <property type="component" value="Chromosome"/>
</dbReference>
<dbReference type="GO" id="GO:0005737">
    <property type="term" value="C:cytoplasm"/>
    <property type="evidence" value="ECO:0007669"/>
    <property type="project" value="UniProtKB-SubCell"/>
</dbReference>
<dbReference type="GO" id="GO:0004055">
    <property type="term" value="F:argininosuccinate synthase activity"/>
    <property type="evidence" value="ECO:0007669"/>
    <property type="project" value="UniProtKB-UniRule"/>
</dbReference>
<dbReference type="GO" id="GO:0005524">
    <property type="term" value="F:ATP binding"/>
    <property type="evidence" value="ECO:0007669"/>
    <property type="project" value="UniProtKB-UniRule"/>
</dbReference>
<dbReference type="GO" id="GO:0000053">
    <property type="term" value="P:argininosuccinate metabolic process"/>
    <property type="evidence" value="ECO:0007669"/>
    <property type="project" value="TreeGrafter"/>
</dbReference>
<dbReference type="GO" id="GO:0006526">
    <property type="term" value="P:L-arginine biosynthetic process"/>
    <property type="evidence" value="ECO:0007669"/>
    <property type="project" value="UniProtKB-UniRule"/>
</dbReference>
<dbReference type="GO" id="GO:0000050">
    <property type="term" value="P:urea cycle"/>
    <property type="evidence" value="ECO:0007669"/>
    <property type="project" value="TreeGrafter"/>
</dbReference>
<dbReference type="CDD" id="cd01999">
    <property type="entry name" value="ASS"/>
    <property type="match status" value="1"/>
</dbReference>
<dbReference type="FunFam" id="3.40.50.620:FF:000019">
    <property type="entry name" value="Argininosuccinate synthase"/>
    <property type="match status" value="1"/>
</dbReference>
<dbReference type="FunFam" id="3.90.1260.10:FF:000007">
    <property type="entry name" value="Argininosuccinate synthase"/>
    <property type="match status" value="1"/>
</dbReference>
<dbReference type="Gene3D" id="3.90.1260.10">
    <property type="entry name" value="Argininosuccinate synthetase, chain A, domain 2"/>
    <property type="match status" value="1"/>
</dbReference>
<dbReference type="Gene3D" id="3.40.50.620">
    <property type="entry name" value="HUPs"/>
    <property type="match status" value="1"/>
</dbReference>
<dbReference type="Gene3D" id="1.20.5.470">
    <property type="entry name" value="Single helix bin"/>
    <property type="match status" value="1"/>
</dbReference>
<dbReference type="HAMAP" id="MF_00005">
    <property type="entry name" value="Arg_succ_synth_type1"/>
    <property type="match status" value="1"/>
</dbReference>
<dbReference type="InterPro" id="IPR048268">
    <property type="entry name" value="Arginosuc_syn_C"/>
</dbReference>
<dbReference type="InterPro" id="IPR048267">
    <property type="entry name" value="Arginosuc_syn_N"/>
</dbReference>
<dbReference type="InterPro" id="IPR001518">
    <property type="entry name" value="Arginosuc_synth"/>
</dbReference>
<dbReference type="InterPro" id="IPR018223">
    <property type="entry name" value="Arginosuc_synth_CS"/>
</dbReference>
<dbReference type="InterPro" id="IPR023434">
    <property type="entry name" value="Arginosuc_synth_type_1_subfam"/>
</dbReference>
<dbReference type="InterPro" id="IPR024074">
    <property type="entry name" value="AS_cat/multimer_dom_body"/>
</dbReference>
<dbReference type="InterPro" id="IPR014729">
    <property type="entry name" value="Rossmann-like_a/b/a_fold"/>
</dbReference>
<dbReference type="NCBIfam" id="TIGR00032">
    <property type="entry name" value="argG"/>
    <property type="match status" value="1"/>
</dbReference>
<dbReference type="NCBIfam" id="NF001770">
    <property type="entry name" value="PRK00509.1"/>
    <property type="match status" value="1"/>
</dbReference>
<dbReference type="PANTHER" id="PTHR11587">
    <property type="entry name" value="ARGININOSUCCINATE SYNTHASE"/>
    <property type="match status" value="1"/>
</dbReference>
<dbReference type="PANTHER" id="PTHR11587:SF2">
    <property type="entry name" value="ARGININOSUCCINATE SYNTHASE"/>
    <property type="match status" value="1"/>
</dbReference>
<dbReference type="Pfam" id="PF20979">
    <property type="entry name" value="Arginosuc_syn_C"/>
    <property type="match status" value="1"/>
</dbReference>
<dbReference type="Pfam" id="PF00764">
    <property type="entry name" value="Arginosuc_synth"/>
    <property type="match status" value="1"/>
</dbReference>
<dbReference type="SUPFAM" id="SSF52402">
    <property type="entry name" value="Adenine nucleotide alpha hydrolases-like"/>
    <property type="match status" value="1"/>
</dbReference>
<dbReference type="SUPFAM" id="SSF69864">
    <property type="entry name" value="Argininosuccinate synthetase, C-terminal domain"/>
    <property type="match status" value="1"/>
</dbReference>
<dbReference type="PROSITE" id="PS00564">
    <property type="entry name" value="ARGININOSUCCIN_SYN_1"/>
    <property type="match status" value="1"/>
</dbReference>
<dbReference type="PROSITE" id="PS00565">
    <property type="entry name" value="ARGININOSUCCIN_SYN_2"/>
    <property type="match status" value="1"/>
</dbReference>